<dbReference type="EMBL" id="U82664">
    <property type="protein sequence ID" value="AAB40209.1"/>
    <property type="molecule type" value="Genomic_DNA"/>
</dbReference>
<dbReference type="EMBL" id="U00096">
    <property type="protein sequence ID" value="AAC73556.1"/>
    <property type="molecule type" value="Genomic_DNA"/>
</dbReference>
<dbReference type="EMBL" id="AP009048">
    <property type="protein sequence ID" value="BAE76233.1"/>
    <property type="molecule type" value="Genomic_DNA"/>
</dbReference>
<dbReference type="PIR" id="E64775">
    <property type="entry name" value="E64775"/>
</dbReference>
<dbReference type="RefSeq" id="NP_414987.3">
    <property type="nucleotide sequence ID" value="NC_000913.3"/>
</dbReference>
<dbReference type="RefSeq" id="WP_000779842.1">
    <property type="nucleotide sequence ID" value="NZ_LN832404.1"/>
</dbReference>
<dbReference type="SMR" id="P77717"/>
<dbReference type="BioGRID" id="4259858">
    <property type="interactions" value="342"/>
</dbReference>
<dbReference type="BioGRID" id="849459">
    <property type="interactions" value="1"/>
</dbReference>
<dbReference type="DIP" id="DIP-11312N"/>
<dbReference type="FunCoup" id="P77717">
    <property type="interactions" value="72"/>
</dbReference>
<dbReference type="IntAct" id="P77717">
    <property type="interactions" value="2"/>
</dbReference>
<dbReference type="STRING" id="511145.b0453"/>
<dbReference type="jPOST" id="P77717"/>
<dbReference type="PaxDb" id="511145-b0453"/>
<dbReference type="EnsemblBacteria" id="AAC73556">
    <property type="protein sequence ID" value="AAC73556"/>
    <property type="gene ID" value="b0453"/>
</dbReference>
<dbReference type="GeneID" id="945070"/>
<dbReference type="KEGG" id="ecj:JW0443"/>
<dbReference type="KEGG" id="eco:b0453"/>
<dbReference type="KEGG" id="ecoc:C3026_02220"/>
<dbReference type="PATRIC" id="fig|1411691.4.peg.1822"/>
<dbReference type="EchoBASE" id="EB3042"/>
<dbReference type="eggNOG" id="COG3126">
    <property type="taxonomic scope" value="Bacteria"/>
</dbReference>
<dbReference type="HOGENOM" id="CLU_130974_0_0_6"/>
<dbReference type="InParanoid" id="P77717"/>
<dbReference type="OMA" id="MKLWHIL"/>
<dbReference type="OrthoDB" id="5348860at2"/>
<dbReference type="PhylomeDB" id="P77717"/>
<dbReference type="BioCyc" id="EcoCyc:G6250-MONOMER"/>
<dbReference type="PRO" id="PR:P77717"/>
<dbReference type="Proteomes" id="UP000000625">
    <property type="component" value="Chromosome"/>
</dbReference>
<dbReference type="GO" id="GO:0005886">
    <property type="term" value="C:plasma membrane"/>
    <property type="evidence" value="ECO:0007669"/>
    <property type="project" value="UniProtKB-SubCell"/>
</dbReference>
<dbReference type="InterPro" id="IPR053196">
    <property type="entry name" value="Lipoprotein_YbaY-like"/>
</dbReference>
<dbReference type="InterPro" id="IPR039366">
    <property type="entry name" value="Pilotin"/>
</dbReference>
<dbReference type="PANTHER" id="PTHR38013">
    <property type="entry name" value="GLYCOPROTEIN/POLYSACCHARIDE METABOLISM"/>
    <property type="match status" value="1"/>
</dbReference>
<dbReference type="PANTHER" id="PTHR38013:SF1">
    <property type="entry name" value="GLYCOPROTEIN_POLYSACCHARIDE METABOLISM"/>
    <property type="match status" value="1"/>
</dbReference>
<dbReference type="Pfam" id="PF09619">
    <property type="entry name" value="YscW"/>
    <property type="match status" value="1"/>
</dbReference>
<dbReference type="PROSITE" id="PS51257">
    <property type="entry name" value="PROKAR_LIPOPROTEIN"/>
    <property type="match status" value="1"/>
</dbReference>
<comment type="interaction">
    <interactant intactId="EBI-558645">
        <id>P77717</id>
    </interactant>
    <interactant intactId="EBI-558621">
        <id>P0AFG6</id>
        <label>sucB</label>
    </interactant>
    <organismsDiffer>false</organismsDiffer>
    <experiments>3</experiments>
</comment>
<comment type="subcellular location">
    <subcellularLocation>
        <location evidence="3">Cell membrane</location>
        <topology evidence="3">Lipid-anchor</topology>
    </subcellularLocation>
</comment>
<reference key="1">
    <citation type="submission" date="1997-01" db="EMBL/GenBank/DDBJ databases">
        <title>Sequence of minutes 4-25 of Escherichia coli.</title>
        <authorList>
            <person name="Chung E."/>
            <person name="Allen E."/>
            <person name="Araujo R."/>
            <person name="Aparicio A.M."/>
            <person name="Davis K."/>
            <person name="Duncan M."/>
            <person name="Federspiel N."/>
            <person name="Hyman R."/>
            <person name="Kalman S."/>
            <person name="Komp C."/>
            <person name="Kurdi O."/>
            <person name="Lew H."/>
            <person name="Lin D."/>
            <person name="Namath A."/>
            <person name="Oefner P."/>
            <person name="Roberts D."/>
            <person name="Schramm S."/>
            <person name="Davis R.W."/>
        </authorList>
    </citation>
    <scope>NUCLEOTIDE SEQUENCE [LARGE SCALE GENOMIC DNA]</scope>
    <source>
        <strain>K12 / MG1655 / ATCC 47076</strain>
    </source>
</reference>
<reference key="2">
    <citation type="journal article" date="1997" name="Science">
        <title>The complete genome sequence of Escherichia coli K-12.</title>
        <authorList>
            <person name="Blattner F.R."/>
            <person name="Plunkett G. III"/>
            <person name="Bloch C.A."/>
            <person name="Perna N.T."/>
            <person name="Burland V."/>
            <person name="Riley M."/>
            <person name="Collado-Vides J."/>
            <person name="Glasner J.D."/>
            <person name="Rode C.K."/>
            <person name="Mayhew G.F."/>
            <person name="Gregor J."/>
            <person name="Davis N.W."/>
            <person name="Kirkpatrick H.A."/>
            <person name="Goeden M.A."/>
            <person name="Rose D.J."/>
            <person name="Mau B."/>
            <person name="Shao Y."/>
        </authorList>
    </citation>
    <scope>NUCLEOTIDE SEQUENCE [LARGE SCALE GENOMIC DNA]</scope>
    <source>
        <strain>K12 / MG1655 / ATCC 47076</strain>
    </source>
</reference>
<reference key="3">
    <citation type="journal article" date="2006" name="Mol. Syst. Biol.">
        <title>Highly accurate genome sequences of Escherichia coli K-12 strains MG1655 and W3110.</title>
        <authorList>
            <person name="Hayashi K."/>
            <person name="Morooka N."/>
            <person name="Yamamoto Y."/>
            <person name="Fujita K."/>
            <person name="Isono K."/>
            <person name="Choi S."/>
            <person name="Ohtsubo E."/>
            <person name="Baba T."/>
            <person name="Wanner B.L."/>
            <person name="Mori H."/>
            <person name="Horiuchi T."/>
        </authorList>
    </citation>
    <scope>NUCLEOTIDE SEQUENCE [LARGE SCALE GENOMIC DNA]</scope>
    <source>
        <strain>K12 / W3110 / ATCC 27325 / DSM 5911</strain>
    </source>
</reference>
<accession>P77717</accession>
<accession>Q2MBX3</accession>
<keyword id="KW-1003">Cell membrane</keyword>
<keyword id="KW-0449">Lipoprotein</keyword>
<keyword id="KW-0472">Membrane</keyword>
<keyword id="KW-0564">Palmitate</keyword>
<keyword id="KW-1185">Reference proteome</keyword>
<keyword id="KW-0732">Signal</keyword>
<protein>
    <recommendedName>
        <fullName>Uncharacterized lipoprotein YbaY</fullName>
    </recommendedName>
</protein>
<name>YBAY_ECOLI</name>
<organism>
    <name type="scientific">Escherichia coli (strain K12)</name>
    <dbReference type="NCBI Taxonomy" id="83333"/>
    <lineage>
        <taxon>Bacteria</taxon>
        <taxon>Pseudomonadati</taxon>
        <taxon>Pseudomonadota</taxon>
        <taxon>Gammaproteobacteria</taxon>
        <taxon>Enterobacterales</taxon>
        <taxon>Enterobacteriaceae</taxon>
        <taxon>Escherichia</taxon>
    </lineage>
</organism>
<gene>
    <name type="primary">ybaY</name>
    <name type="ordered locus">b0453</name>
    <name type="ordered locus">JW0443</name>
</gene>
<proteinExistence type="evidence at protein level"/>
<feature type="signal peptide" evidence="1">
    <location>
        <begin position="1"/>
        <end position="18"/>
    </location>
</feature>
<feature type="chain" id="PRO_0000013795" description="Uncharacterized lipoprotein YbaY">
    <location>
        <begin position="19"/>
        <end position="190"/>
    </location>
</feature>
<feature type="region of interest" description="Disordered" evidence="2">
    <location>
        <begin position="162"/>
        <end position="190"/>
    </location>
</feature>
<feature type="compositionally biased region" description="Low complexity" evidence="2">
    <location>
        <begin position="162"/>
        <end position="182"/>
    </location>
</feature>
<feature type="lipid moiety-binding region" description="N-palmitoyl cysteine" evidence="1">
    <location>
        <position position="19"/>
    </location>
</feature>
<feature type="lipid moiety-binding region" description="S-diacylglycerol cysteine" evidence="1">
    <location>
        <position position="19"/>
    </location>
</feature>
<evidence type="ECO:0000255" key="1">
    <source>
        <dbReference type="PROSITE-ProRule" id="PRU00303"/>
    </source>
</evidence>
<evidence type="ECO:0000256" key="2">
    <source>
        <dbReference type="SAM" id="MobiDB-lite"/>
    </source>
</evidence>
<evidence type="ECO:0000305" key="3"/>
<sequence length="190" mass="19431">MKLVHMASGLAVAIALAACADKSADIQTPAPAANTSISATQQPAIQQPNVSGTVWIRQKVALPPDAVLTVTLSDASLADAPSKVLAQKAVRTEGKQSPFSFVLSFNPADVQPNARILLSAAITVNDKLVFITDTVQPVINQGGTKADLTLVPVQQTAVPVQASGGATTTVPSTSPTQVNPSSAVPAPTQY</sequence>